<proteinExistence type="inferred from homology"/>
<name>GCS2_BURCJ</name>
<reference key="1">
    <citation type="journal article" date="2009" name="J. Bacteriol.">
        <title>The genome of Burkholderia cenocepacia J2315, an epidemic pathogen of cystic fibrosis patients.</title>
        <authorList>
            <person name="Holden M.T."/>
            <person name="Seth-Smith H.M."/>
            <person name="Crossman L.C."/>
            <person name="Sebaihia M."/>
            <person name="Bentley S.D."/>
            <person name="Cerdeno-Tarraga A.M."/>
            <person name="Thomson N.R."/>
            <person name="Bason N."/>
            <person name="Quail M.A."/>
            <person name="Sharp S."/>
            <person name="Cherevach I."/>
            <person name="Churcher C."/>
            <person name="Goodhead I."/>
            <person name="Hauser H."/>
            <person name="Holroyd N."/>
            <person name="Mungall K."/>
            <person name="Scott P."/>
            <person name="Walker D."/>
            <person name="White B."/>
            <person name="Rose H."/>
            <person name="Iversen P."/>
            <person name="Mil-Homens D."/>
            <person name="Rocha E.P."/>
            <person name="Fialho A.M."/>
            <person name="Baldwin A."/>
            <person name="Dowson C."/>
            <person name="Barrell B.G."/>
            <person name="Govan J.R."/>
            <person name="Vandamme P."/>
            <person name="Hart C.A."/>
            <person name="Mahenthiralingam E."/>
            <person name="Parkhill J."/>
        </authorList>
    </citation>
    <scope>NUCLEOTIDE SEQUENCE [LARGE SCALE GENOMIC DNA]</scope>
    <source>
        <strain>ATCC BAA-245 / DSM 16553 / LMG 16656 / NCTC 13227 / J2315 / CF5610</strain>
    </source>
</reference>
<keyword id="KW-0067">ATP-binding</keyword>
<keyword id="KW-0436">Ligase</keyword>
<keyword id="KW-0547">Nucleotide-binding</keyword>
<comment type="function">
    <text evidence="1">ATP-dependent carboxylate-amine ligase which exhibits weak glutamate--cysteine ligase activity.</text>
</comment>
<comment type="catalytic activity">
    <reaction evidence="1">
        <text>L-cysteine + L-glutamate + ATP = gamma-L-glutamyl-L-cysteine + ADP + phosphate + H(+)</text>
        <dbReference type="Rhea" id="RHEA:13285"/>
        <dbReference type="ChEBI" id="CHEBI:15378"/>
        <dbReference type="ChEBI" id="CHEBI:29985"/>
        <dbReference type="ChEBI" id="CHEBI:30616"/>
        <dbReference type="ChEBI" id="CHEBI:35235"/>
        <dbReference type="ChEBI" id="CHEBI:43474"/>
        <dbReference type="ChEBI" id="CHEBI:58173"/>
        <dbReference type="ChEBI" id="CHEBI:456216"/>
        <dbReference type="EC" id="6.3.2.2"/>
    </reaction>
</comment>
<comment type="similarity">
    <text evidence="1">Belongs to the glutamate--cysteine ligase type 2 family. YbdK subfamily.</text>
</comment>
<feature type="chain" id="PRO_1000148208" description="Putative glutamate--cysteine ligase 2">
    <location>
        <begin position="1"/>
        <end position="371"/>
    </location>
</feature>
<organism>
    <name type="scientific">Burkholderia cenocepacia (strain ATCC BAA-245 / DSM 16553 / LMG 16656 / NCTC 13227 / J2315 / CF5610)</name>
    <name type="common">Burkholderia cepacia (strain J2315)</name>
    <dbReference type="NCBI Taxonomy" id="216591"/>
    <lineage>
        <taxon>Bacteria</taxon>
        <taxon>Pseudomonadati</taxon>
        <taxon>Pseudomonadota</taxon>
        <taxon>Betaproteobacteria</taxon>
        <taxon>Burkholderiales</taxon>
        <taxon>Burkholderiaceae</taxon>
        <taxon>Burkholderia</taxon>
        <taxon>Burkholderia cepacia complex</taxon>
    </lineage>
</organism>
<sequence length="371" mass="41735">MALETFVNSEPFTFGVELEIQVVNTHNYDLTKAASDLMRLIQGETFPGNITPEITESMIELSTGICHSHEQAVSELHAIRDVLVKAADQLNVGLAGGGTHAFQQWSDRQIYDAPRFQYISELYGYLAKQFTVFGQHVHIGCPDPDSALFLLHSMSRFIPHFIALSASSPFVQNVDTGFHSARLNSVFAFPLSGRAPFVLTWDSFEEYFTKMVNTGVVNSMKDFYWDIRPKPGYGTIEVRVMDTPLSVDRAAAIACYIQTLARYLLTDRPLKLSEDDYLVYTFNRFEACRFGLEGTCVNPQTGERRTIAEDILDTLDRIAPHAAALGSRAALDEIGALAKARVNDASWLRTVFKQEKSLNETVRQQCLRWRE</sequence>
<accession>B4E558</accession>
<gene>
    <name type="ordered locus">BceJ2315_00010</name>
    <name type="ORF">BCAL0002</name>
</gene>
<dbReference type="EC" id="6.3.2.2" evidence="1"/>
<dbReference type="EMBL" id="AM747720">
    <property type="protein sequence ID" value="CAR50307.1"/>
    <property type="molecule type" value="Genomic_DNA"/>
</dbReference>
<dbReference type="RefSeq" id="WP_006490006.1">
    <property type="nucleotide sequence ID" value="NC_011000.1"/>
</dbReference>
<dbReference type="SMR" id="B4E558"/>
<dbReference type="KEGG" id="bcj:BCAL0002"/>
<dbReference type="eggNOG" id="COG2170">
    <property type="taxonomic scope" value="Bacteria"/>
</dbReference>
<dbReference type="HOGENOM" id="CLU_044848_1_1_4"/>
<dbReference type="BioCyc" id="BCEN216591:G1G1V-3-MONOMER"/>
<dbReference type="Proteomes" id="UP000001035">
    <property type="component" value="Chromosome 1"/>
</dbReference>
<dbReference type="GO" id="GO:0005524">
    <property type="term" value="F:ATP binding"/>
    <property type="evidence" value="ECO:0007669"/>
    <property type="project" value="UniProtKB-KW"/>
</dbReference>
<dbReference type="GO" id="GO:0004357">
    <property type="term" value="F:glutamate-cysteine ligase activity"/>
    <property type="evidence" value="ECO:0007669"/>
    <property type="project" value="UniProtKB-EC"/>
</dbReference>
<dbReference type="GO" id="GO:0042398">
    <property type="term" value="P:modified amino acid biosynthetic process"/>
    <property type="evidence" value="ECO:0007669"/>
    <property type="project" value="InterPro"/>
</dbReference>
<dbReference type="Gene3D" id="3.30.590.20">
    <property type="match status" value="1"/>
</dbReference>
<dbReference type="HAMAP" id="MF_01609">
    <property type="entry name" value="Glu_cys_ligase_2"/>
    <property type="match status" value="1"/>
</dbReference>
<dbReference type="InterPro" id="IPR050141">
    <property type="entry name" value="GCL_type2/YbdK_subfam"/>
</dbReference>
<dbReference type="InterPro" id="IPR006336">
    <property type="entry name" value="GCS2"/>
</dbReference>
<dbReference type="InterPro" id="IPR014746">
    <property type="entry name" value="Gln_synth/guanido_kin_cat_dom"/>
</dbReference>
<dbReference type="InterPro" id="IPR011793">
    <property type="entry name" value="YbdK"/>
</dbReference>
<dbReference type="NCBIfam" id="TIGR02050">
    <property type="entry name" value="gshA_cyan_rel"/>
    <property type="match status" value="1"/>
</dbReference>
<dbReference type="NCBIfam" id="NF010040">
    <property type="entry name" value="PRK13516.1"/>
    <property type="match status" value="1"/>
</dbReference>
<dbReference type="PANTHER" id="PTHR36510">
    <property type="entry name" value="GLUTAMATE--CYSTEINE LIGASE 2-RELATED"/>
    <property type="match status" value="1"/>
</dbReference>
<dbReference type="PANTHER" id="PTHR36510:SF1">
    <property type="entry name" value="GLUTAMATE--CYSTEINE LIGASE 2-RELATED"/>
    <property type="match status" value="1"/>
</dbReference>
<dbReference type="Pfam" id="PF04107">
    <property type="entry name" value="GCS2"/>
    <property type="match status" value="1"/>
</dbReference>
<dbReference type="SUPFAM" id="SSF55931">
    <property type="entry name" value="Glutamine synthetase/guanido kinase"/>
    <property type="match status" value="1"/>
</dbReference>
<evidence type="ECO:0000255" key="1">
    <source>
        <dbReference type="HAMAP-Rule" id="MF_01609"/>
    </source>
</evidence>
<protein>
    <recommendedName>
        <fullName evidence="1">Putative glutamate--cysteine ligase 2</fullName>
        <ecNumber evidence="1">6.3.2.2</ecNumber>
    </recommendedName>
    <alternativeName>
        <fullName evidence="1">Gamma-glutamylcysteine synthetase 2</fullName>
        <shortName evidence="1">GCS 2</shortName>
        <shortName evidence="1">Gamma-GCS 2</shortName>
    </alternativeName>
</protein>